<accession>P87090</accession>
<protein>
    <recommendedName>
        <fullName>Cross-pathway control protein 1</fullName>
    </recommendedName>
</protein>
<reference key="1">
    <citation type="journal article" date="1998" name="Fungal Genet. Biol.">
        <title>Cloning and characterization of a general amino acid control transcriptional activator from the chestnut blight fungus Cryphonectria parasitica.</title>
        <authorList>
            <person name="Wang P."/>
            <person name="Larson T.G."/>
            <person name="Chen C.H."/>
            <person name="Pawlyk D.M."/>
            <person name="Clark J.A."/>
            <person name="Nuss D.L."/>
        </authorList>
    </citation>
    <scope>NUCLEOTIDE SEQUENCE [GENOMIC DNA]</scope>
    <source>
        <strain>ATCC 38755 / EP155</strain>
    </source>
</reference>
<name>CPC1_CRYPA</name>
<sequence length="247" mass="26156">MELDIDLPDFGPFEGGAPVSEFSSPDNPVFGLDLSGSLHSSVMSVSPTELLLTENLMSAPGSTALTHLTTPSGYDTSPAFTEDWNASPLFAQNDFETAQEWPSLFPDAETSAAPAPALAAPAPVPAAQAEDSPSVDSEDFEPARRPSQARKSSASSSPSGRHSSVSGVSARRRGKPLPPITIDDPSDTVGMKRAKNTLAARKSRARKAERMDELERQVRELEAEKEKLAAELAHWKSLASSQGAAGQ</sequence>
<gene>
    <name type="primary">CPC-1</name>
</gene>
<keyword id="KW-0010">Activator</keyword>
<keyword id="KW-0028">Amino-acid biosynthesis</keyword>
<keyword id="KW-0238">DNA-binding</keyword>
<keyword id="KW-0539">Nucleus</keyword>
<keyword id="KW-0804">Transcription</keyword>
<keyword id="KW-0805">Transcription regulation</keyword>
<evidence type="ECO:0000250" key="1"/>
<evidence type="ECO:0000255" key="2">
    <source>
        <dbReference type="PROSITE-ProRule" id="PRU00978"/>
    </source>
</evidence>
<evidence type="ECO:0000256" key="3">
    <source>
        <dbReference type="SAM" id="MobiDB-lite"/>
    </source>
</evidence>
<evidence type="ECO:0000305" key="4"/>
<dbReference type="EMBL" id="U96134">
    <property type="protein sequence ID" value="AAC16255.1"/>
    <property type="molecule type" value="Genomic_DNA"/>
</dbReference>
<dbReference type="SMR" id="P87090"/>
<dbReference type="PHI-base" id="PHI:467"/>
<dbReference type="GO" id="GO:0005634">
    <property type="term" value="C:nucleus"/>
    <property type="evidence" value="ECO:0007669"/>
    <property type="project" value="UniProtKB-SubCell"/>
</dbReference>
<dbReference type="GO" id="GO:0005667">
    <property type="term" value="C:transcription regulator complex"/>
    <property type="evidence" value="ECO:0007669"/>
    <property type="project" value="TreeGrafter"/>
</dbReference>
<dbReference type="GO" id="GO:0000981">
    <property type="term" value="F:DNA-binding transcription factor activity, RNA polymerase II-specific"/>
    <property type="evidence" value="ECO:0007669"/>
    <property type="project" value="TreeGrafter"/>
</dbReference>
<dbReference type="GO" id="GO:0000978">
    <property type="term" value="F:RNA polymerase II cis-regulatory region sequence-specific DNA binding"/>
    <property type="evidence" value="ECO:0007669"/>
    <property type="project" value="TreeGrafter"/>
</dbReference>
<dbReference type="GO" id="GO:0008652">
    <property type="term" value="P:amino acid biosynthetic process"/>
    <property type="evidence" value="ECO:0007669"/>
    <property type="project" value="UniProtKB-KW"/>
</dbReference>
<dbReference type="GO" id="GO:0001080">
    <property type="term" value="P:nitrogen catabolite activation of transcription from RNA polymerase II promoter"/>
    <property type="evidence" value="ECO:0007669"/>
    <property type="project" value="TreeGrafter"/>
</dbReference>
<dbReference type="GO" id="GO:1903833">
    <property type="term" value="P:positive regulation of cellular response to amino acid starvation"/>
    <property type="evidence" value="ECO:0007669"/>
    <property type="project" value="TreeGrafter"/>
</dbReference>
<dbReference type="CDD" id="cd12193">
    <property type="entry name" value="bZIP_GCN4"/>
    <property type="match status" value="1"/>
</dbReference>
<dbReference type="FunFam" id="3.30.160.60:FF:001491">
    <property type="entry name" value="Cross-pathway control protein A"/>
    <property type="match status" value="1"/>
</dbReference>
<dbReference type="Gene3D" id="3.30.160.60">
    <property type="entry name" value="Classic Zinc Finger"/>
    <property type="match status" value="1"/>
</dbReference>
<dbReference type="InterPro" id="IPR050946">
    <property type="entry name" value="AP-1_TF_bZIP"/>
</dbReference>
<dbReference type="InterPro" id="IPR004827">
    <property type="entry name" value="bZIP"/>
</dbReference>
<dbReference type="InterPro" id="IPR046347">
    <property type="entry name" value="bZIP_sf"/>
</dbReference>
<dbReference type="PANTHER" id="PTHR11462">
    <property type="entry name" value="JUN TRANSCRIPTION FACTOR-RELATED"/>
    <property type="match status" value="1"/>
</dbReference>
<dbReference type="PANTHER" id="PTHR11462:SF35">
    <property type="entry name" value="TRANSCRIPTION FACTOR JRA"/>
    <property type="match status" value="1"/>
</dbReference>
<dbReference type="Pfam" id="PF07716">
    <property type="entry name" value="bZIP_2"/>
    <property type="match status" value="1"/>
</dbReference>
<dbReference type="SMART" id="SM00338">
    <property type="entry name" value="BRLZ"/>
    <property type="match status" value="1"/>
</dbReference>
<dbReference type="SUPFAM" id="SSF57959">
    <property type="entry name" value="Leucine zipper domain"/>
    <property type="match status" value="1"/>
</dbReference>
<dbReference type="PROSITE" id="PS50217">
    <property type="entry name" value="BZIP"/>
    <property type="match status" value="1"/>
</dbReference>
<dbReference type="PROSITE" id="PS00036">
    <property type="entry name" value="BZIP_BASIC"/>
    <property type="match status" value="1"/>
</dbReference>
<organism>
    <name type="scientific">Cryphonectria parasitica</name>
    <name type="common">Chestnut blight fungus</name>
    <name type="synonym">Endothia parasitica</name>
    <dbReference type="NCBI Taxonomy" id="5116"/>
    <lineage>
        <taxon>Eukaryota</taxon>
        <taxon>Fungi</taxon>
        <taxon>Dikarya</taxon>
        <taxon>Ascomycota</taxon>
        <taxon>Pezizomycotina</taxon>
        <taxon>Sordariomycetes</taxon>
        <taxon>Sordariomycetidae</taxon>
        <taxon>Diaporthales</taxon>
        <taxon>Cryphonectriaceae</taxon>
        <taxon>Cryphonectria-Endothia species complex</taxon>
        <taxon>Cryphonectria</taxon>
    </lineage>
</organism>
<proteinExistence type="inferred from homology"/>
<feature type="chain" id="PRO_0000076487" description="Cross-pathway control protein 1">
    <location>
        <begin position="1"/>
        <end position="247"/>
    </location>
</feature>
<feature type="domain" description="bZIP" evidence="2">
    <location>
        <begin position="186"/>
        <end position="247"/>
    </location>
</feature>
<feature type="region of interest" description="Disordered" evidence="3">
    <location>
        <begin position="107"/>
        <end position="213"/>
    </location>
</feature>
<feature type="region of interest" description="Basic motif" evidence="2">
    <location>
        <begin position="192"/>
        <end position="210"/>
    </location>
</feature>
<feature type="region of interest" description="Leucine-zipper" evidence="2">
    <location>
        <begin position="214"/>
        <end position="228"/>
    </location>
</feature>
<feature type="compositionally biased region" description="Low complexity" evidence="3">
    <location>
        <begin position="107"/>
        <end position="129"/>
    </location>
</feature>
<feature type="compositionally biased region" description="Low complexity" evidence="3">
    <location>
        <begin position="145"/>
        <end position="169"/>
    </location>
</feature>
<comment type="function">
    <text>General amino acid control transactivator. Binds to the AP-1 consensus DNA binding element 5'-[AG]TGACTCAT-3'.</text>
</comment>
<comment type="subunit">
    <text evidence="1">Binds DNA as a dimer.</text>
</comment>
<comment type="subcellular location">
    <subcellularLocation>
        <location>Nucleus</location>
    </subcellularLocation>
</comment>
<comment type="similarity">
    <text evidence="4">Belongs to the bZIP family. GCN4 subfamily.</text>
</comment>